<proteinExistence type="evidence at transcript level"/>
<protein>
    <recommendedName>
        <fullName>Gremlin-1</fullName>
    </recommendedName>
    <alternativeName>
        <fullName>Cysteine knot superfamily 1, BMP antagonist 1</fullName>
    </alternativeName>
    <alternativeName>
        <fullName>Down-regulated in Mos-transformed cells protein</fullName>
    </alternativeName>
</protein>
<keyword id="KW-0202">Cytokine</keyword>
<keyword id="KW-1015">Disulfide bond</keyword>
<keyword id="KW-0325">Glycoprotein</keyword>
<keyword id="KW-1185">Reference proteome</keyword>
<keyword id="KW-0964">Secreted</keyword>
<keyword id="KW-0732">Signal</keyword>
<dbReference type="EMBL" id="AF045801">
    <property type="protein sequence ID" value="AAC40111.1"/>
    <property type="molecule type" value="mRNA"/>
</dbReference>
<dbReference type="EMBL" id="AF108189">
    <property type="protein sequence ID" value="AAD54056.1"/>
    <property type="molecule type" value="mRNA"/>
</dbReference>
<dbReference type="EMBL" id="BC015293">
    <property type="protein sequence ID" value="AAH15293.1"/>
    <property type="molecule type" value="mRNA"/>
</dbReference>
<dbReference type="CCDS" id="CCDS16560.1"/>
<dbReference type="RefSeq" id="NP_035954.1">
    <property type="nucleotide sequence ID" value="NM_011824.4"/>
</dbReference>
<dbReference type="SMR" id="O70326"/>
<dbReference type="BioGRID" id="204780">
    <property type="interactions" value="1"/>
</dbReference>
<dbReference type="FunCoup" id="O70326">
    <property type="interactions" value="181"/>
</dbReference>
<dbReference type="STRING" id="10090.ENSMUSP00000097170"/>
<dbReference type="GlyCosmos" id="O70326">
    <property type="glycosylation" value="1 site, No reported glycans"/>
</dbReference>
<dbReference type="GlyGen" id="O70326">
    <property type="glycosylation" value="1 site, 1 N-linked glycan (1 site)"/>
</dbReference>
<dbReference type="iPTMnet" id="O70326"/>
<dbReference type="PhosphoSitePlus" id="O70326"/>
<dbReference type="PaxDb" id="10090-ENSMUSP00000097170"/>
<dbReference type="PeptideAtlas" id="O70326"/>
<dbReference type="ProteomicsDB" id="271015"/>
<dbReference type="Antibodypedia" id="2030">
    <property type="antibodies" value="565 antibodies from 36 providers"/>
</dbReference>
<dbReference type="DNASU" id="23892"/>
<dbReference type="Ensembl" id="ENSMUST00000099575.4">
    <property type="protein sequence ID" value="ENSMUSP00000097170.4"/>
    <property type="gene ID" value="ENSMUSG00000074934.4"/>
</dbReference>
<dbReference type="GeneID" id="23892"/>
<dbReference type="KEGG" id="mmu:23892"/>
<dbReference type="UCSC" id="uc008lpp.2">
    <property type="organism name" value="mouse"/>
</dbReference>
<dbReference type="AGR" id="MGI:1344337"/>
<dbReference type="CTD" id="26585"/>
<dbReference type="MGI" id="MGI:1344337">
    <property type="gene designation" value="Grem1"/>
</dbReference>
<dbReference type="VEuPathDB" id="HostDB:ENSMUSG00000074934"/>
<dbReference type="eggNOG" id="ENOG502QQ5X">
    <property type="taxonomic scope" value="Eukaryota"/>
</dbReference>
<dbReference type="GeneTree" id="ENSGT00940000154209"/>
<dbReference type="HOGENOM" id="CLU_101024_0_0_1"/>
<dbReference type="InParanoid" id="O70326"/>
<dbReference type="OMA" id="PPDKDQY"/>
<dbReference type="OrthoDB" id="10061784at2759"/>
<dbReference type="PhylomeDB" id="O70326"/>
<dbReference type="TreeFam" id="TF106445"/>
<dbReference type="BioGRID-ORCS" id="23892">
    <property type="hits" value="1 hit in 80 CRISPR screens"/>
</dbReference>
<dbReference type="ChiTaRS" id="Grem1">
    <property type="organism name" value="mouse"/>
</dbReference>
<dbReference type="PRO" id="PR:O70326"/>
<dbReference type="Proteomes" id="UP000000589">
    <property type="component" value="Chromosome 2"/>
</dbReference>
<dbReference type="RNAct" id="O70326">
    <property type="molecule type" value="protein"/>
</dbReference>
<dbReference type="Bgee" id="ENSMUSG00000074934">
    <property type="expression patterns" value="Expressed in nasal concha cartilage and 121 other cell types or tissues"/>
</dbReference>
<dbReference type="ExpressionAtlas" id="O70326">
    <property type="expression patterns" value="baseline and differential"/>
</dbReference>
<dbReference type="GO" id="GO:0005576">
    <property type="term" value="C:extracellular region"/>
    <property type="evidence" value="ECO:0000304"/>
    <property type="project" value="Reactome"/>
</dbReference>
<dbReference type="GO" id="GO:0005615">
    <property type="term" value="C:extracellular space"/>
    <property type="evidence" value="ECO:0000314"/>
    <property type="project" value="BHF-UCL"/>
</dbReference>
<dbReference type="GO" id="GO:0036122">
    <property type="term" value="F:BMP binding"/>
    <property type="evidence" value="ECO:0000250"/>
    <property type="project" value="UniProtKB"/>
</dbReference>
<dbReference type="GO" id="GO:0005125">
    <property type="term" value="F:cytokine activity"/>
    <property type="evidence" value="ECO:0007669"/>
    <property type="project" value="UniProtKB-KW"/>
</dbReference>
<dbReference type="GO" id="GO:0043395">
    <property type="term" value="F:heparan sulfate proteoglycan binding"/>
    <property type="evidence" value="ECO:0000304"/>
    <property type="project" value="BHF-UCL"/>
</dbReference>
<dbReference type="GO" id="GO:0042803">
    <property type="term" value="F:protein homodimerization activity"/>
    <property type="evidence" value="ECO:0007669"/>
    <property type="project" value="Ensembl"/>
</dbReference>
<dbReference type="GO" id="GO:0048018">
    <property type="term" value="F:receptor ligand activity"/>
    <property type="evidence" value="ECO:0000353"/>
    <property type="project" value="BHF-UCL"/>
</dbReference>
<dbReference type="GO" id="GO:0030297">
    <property type="term" value="F:transmembrane receptor protein tyrosine kinase activator activity"/>
    <property type="evidence" value="ECO:0000314"/>
    <property type="project" value="BHF-UCL"/>
</dbReference>
<dbReference type="GO" id="GO:0043184">
    <property type="term" value="F:vascular endothelial growth factor receptor 2 binding"/>
    <property type="evidence" value="ECO:0000353"/>
    <property type="project" value="BHF-UCL"/>
</dbReference>
<dbReference type="GO" id="GO:0001525">
    <property type="term" value="P:angiogenesis"/>
    <property type="evidence" value="ECO:0000314"/>
    <property type="project" value="MGI"/>
</dbReference>
<dbReference type="GO" id="GO:0009887">
    <property type="term" value="P:animal organ morphogenesis"/>
    <property type="evidence" value="ECO:0000315"/>
    <property type="project" value="MGI"/>
</dbReference>
<dbReference type="GO" id="GO:0055007">
    <property type="term" value="P:cardiac muscle cell differentiation"/>
    <property type="evidence" value="ECO:0000314"/>
    <property type="project" value="BHF-UCL"/>
</dbReference>
<dbReference type="GO" id="GO:0060379">
    <property type="term" value="P:cardiac muscle cell myoblast differentiation"/>
    <property type="evidence" value="ECO:0000314"/>
    <property type="project" value="BHF-UCL"/>
</dbReference>
<dbReference type="GO" id="GO:0002042">
    <property type="term" value="P:cell migration involved in sprouting angiogenesis"/>
    <property type="evidence" value="ECO:0000314"/>
    <property type="project" value="BHF-UCL"/>
</dbReference>
<dbReference type="GO" id="GO:0000902">
    <property type="term" value="P:cell morphogenesis"/>
    <property type="evidence" value="ECO:0007669"/>
    <property type="project" value="Ensembl"/>
</dbReference>
<dbReference type="GO" id="GO:0007267">
    <property type="term" value="P:cell-cell signaling"/>
    <property type="evidence" value="ECO:0000315"/>
    <property type="project" value="MGI"/>
</dbReference>
<dbReference type="GO" id="GO:0030199">
    <property type="term" value="P:collagen fibril organization"/>
    <property type="evidence" value="ECO:0007669"/>
    <property type="project" value="Ensembl"/>
</dbReference>
<dbReference type="GO" id="GO:0048263">
    <property type="term" value="P:determination of dorsal identity"/>
    <property type="evidence" value="ECO:0007669"/>
    <property type="project" value="Ensembl"/>
</dbReference>
<dbReference type="GO" id="GO:0030326">
    <property type="term" value="P:embryonic limb morphogenesis"/>
    <property type="evidence" value="ECO:0000315"/>
    <property type="project" value="MGI"/>
</dbReference>
<dbReference type="GO" id="GO:0043542">
    <property type="term" value="P:endothelial cell migration"/>
    <property type="evidence" value="ECO:0000314"/>
    <property type="project" value="BHF-UCL"/>
</dbReference>
<dbReference type="GO" id="GO:0003337">
    <property type="term" value="P:mesenchymal to epithelial transition involved in metanephros morphogenesis"/>
    <property type="evidence" value="ECO:0000314"/>
    <property type="project" value="UniProtKB"/>
</dbReference>
<dbReference type="GO" id="GO:0043066">
    <property type="term" value="P:negative regulation of apoptotic process"/>
    <property type="evidence" value="ECO:0007669"/>
    <property type="project" value="Ensembl"/>
</dbReference>
<dbReference type="GO" id="GO:0030514">
    <property type="term" value="P:negative regulation of BMP signaling pathway"/>
    <property type="evidence" value="ECO:0000315"/>
    <property type="project" value="MGI"/>
</dbReference>
<dbReference type="GO" id="GO:1900158">
    <property type="term" value="P:negative regulation of bone mineralization involved in bone maturation"/>
    <property type="evidence" value="ECO:0007669"/>
    <property type="project" value="Ensembl"/>
</dbReference>
<dbReference type="GO" id="GO:0046851">
    <property type="term" value="P:negative regulation of bone remodeling"/>
    <property type="evidence" value="ECO:0007669"/>
    <property type="project" value="Ensembl"/>
</dbReference>
<dbReference type="GO" id="GO:1900155">
    <property type="term" value="P:negative regulation of bone trabecula formation"/>
    <property type="evidence" value="ECO:0007669"/>
    <property type="project" value="Ensembl"/>
</dbReference>
<dbReference type="GO" id="GO:0090090">
    <property type="term" value="P:negative regulation of canonical Wnt signaling pathway"/>
    <property type="evidence" value="ECO:0007669"/>
    <property type="project" value="Ensembl"/>
</dbReference>
<dbReference type="GO" id="GO:0032331">
    <property type="term" value="P:negative regulation of chondrocyte differentiation"/>
    <property type="evidence" value="ECO:0007669"/>
    <property type="project" value="Ensembl"/>
</dbReference>
<dbReference type="GO" id="GO:0045892">
    <property type="term" value="P:negative regulation of DNA-templated transcription"/>
    <property type="evidence" value="ECO:0000315"/>
    <property type="project" value="UniProtKB"/>
</dbReference>
<dbReference type="GO" id="GO:0045668">
    <property type="term" value="P:negative regulation of osteoblast differentiation"/>
    <property type="evidence" value="ECO:0000250"/>
    <property type="project" value="UniProtKB"/>
</dbReference>
<dbReference type="GO" id="GO:0033689">
    <property type="term" value="P:negative regulation of osteoblast proliferation"/>
    <property type="evidence" value="ECO:0007669"/>
    <property type="project" value="Ensembl"/>
</dbReference>
<dbReference type="GO" id="GO:0090291">
    <property type="term" value="P:negative regulation of osteoclast proliferation"/>
    <property type="evidence" value="ECO:0007669"/>
    <property type="project" value="Ensembl"/>
</dbReference>
<dbReference type="GO" id="GO:0060392">
    <property type="term" value="P:negative regulation of SMAD protein signal transduction"/>
    <property type="evidence" value="ECO:0007669"/>
    <property type="project" value="Ensembl"/>
</dbReference>
<dbReference type="GO" id="GO:0045766">
    <property type="term" value="P:positive regulation of angiogenesis"/>
    <property type="evidence" value="ECO:0000315"/>
    <property type="project" value="BHF-UCL"/>
</dbReference>
<dbReference type="GO" id="GO:0090190">
    <property type="term" value="P:positive regulation of branching involved in ureteric bud morphogenesis"/>
    <property type="evidence" value="ECO:0000314"/>
    <property type="project" value="UniProtKB"/>
</dbReference>
<dbReference type="GO" id="GO:0090050">
    <property type="term" value="P:positive regulation of cell migration involved in sprouting angiogenesis"/>
    <property type="evidence" value="ECO:0000314"/>
    <property type="project" value="BHF-UCL"/>
</dbReference>
<dbReference type="GO" id="GO:0008284">
    <property type="term" value="P:positive regulation of cell population proliferation"/>
    <property type="evidence" value="ECO:0007669"/>
    <property type="project" value="Ensembl"/>
</dbReference>
<dbReference type="GO" id="GO:0045893">
    <property type="term" value="P:positive regulation of DNA-templated transcription"/>
    <property type="evidence" value="ECO:0000314"/>
    <property type="project" value="UniProtKB"/>
</dbReference>
<dbReference type="GO" id="GO:1901224">
    <property type="term" value="P:positive regulation of non-canonical NF-kappaB signal transduction"/>
    <property type="evidence" value="ECO:0000314"/>
    <property type="project" value="MGI"/>
</dbReference>
<dbReference type="GO" id="GO:0002092">
    <property type="term" value="P:positive regulation of receptor internalization"/>
    <property type="evidence" value="ECO:0000314"/>
    <property type="project" value="BHF-UCL"/>
</dbReference>
<dbReference type="GO" id="GO:0045944">
    <property type="term" value="P:positive regulation of transcription by RNA polymerase II"/>
    <property type="evidence" value="ECO:0000314"/>
    <property type="project" value="BHF-UCL"/>
</dbReference>
<dbReference type="GO" id="GO:1900748">
    <property type="term" value="P:positive regulation of vascular endothelial growth factor signaling pathway"/>
    <property type="evidence" value="ECO:0000314"/>
    <property type="project" value="BHF-UCL"/>
</dbReference>
<dbReference type="GO" id="GO:0009954">
    <property type="term" value="P:proximal/distal pattern formation"/>
    <property type="evidence" value="ECO:0000315"/>
    <property type="project" value="MGI"/>
</dbReference>
<dbReference type="GO" id="GO:0010717">
    <property type="term" value="P:regulation of epithelial to mesenchymal transition"/>
    <property type="evidence" value="ECO:0007669"/>
    <property type="project" value="Ensembl"/>
</dbReference>
<dbReference type="GO" id="GO:0051893">
    <property type="term" value="P:regulation of focal adhesion assembly"/>
    <property type="evidence" value="ECO:0000314"/>
    <property type="project" value="BHF-UCL"/>
</dbReference>
<dbReference type="GO" id="GO:0007165">
    <property type="term" value="P:signal transduction"/>
    <property type="evidence" value="ECO:0000314"/>
    <property type="project" value="BHF-UCL"/>
</dbReference>
<dbReference type="GO" id="GO:0060676">
    <property type="term" value="P:ureteric bud formation"/>
    <property type="evidence" value="ECO:0000314"/>
    <property type="project" value="UniProtKB"/>
</dbReference>
<dbReference type="FunFam" id="2.10.90.10:FF:000013">
    <property type="entry name" value="Gremlin"/>
    <property type="match status" value="1"/>
</dbReference>
<dbReference type="Gene3D" id="2.10.90.10">
    <property type="entry name" value="Cystine-knot cytokines"/>
    <property type="match status" value="1"/>
</dbReference>
<dbReference type="InterPro" id="IPR006207">
    <property type="entry name" value="Cys_knot_C"/>
</dbReference>
<dbReference type="InterPro" id="IPR029034">
    <property type="entry name" value="Cystine-knot_cytokine"/>
</dbReference>
<dbReference type="InterPro" id="IPR004133">
    <property type="entry name" value="DAN"/>
</dbReference>
<dbReference type="InterPro" id="IPR017159">
    <property type="entry name" value="Gremlin-1/2"/>
</dbReference>
<dbReference type="PANTHER" id="PTHR15283">
    <property type="entry name" value="GREMLIN 1"/>
    <property type="match status" value="1"/>
</dbReference>
<dbReference type="PANTHER" id="PTHR15283:SF3">
    <property type="entry name" value="GREMLIN-1"/>
    <property type="match status" value="1"/>
</dbReference>
<dbReference type="Pfam" id="PF03045">
    <property type="entry name" value="DAN"/>
    <property type="match status" value="1"/>
</dbReference>
<dbReference type="PIRSF" id="PIRSF037254">
    <property type="entry name" value="Gremlin_precursor"/>
    <property type="match status" value="1"/>
</dbReference>
<dbReference type="SMART" id="SM00041">
    <property type="entry name" value="CT"/>
    <property type="match status" value="1"/>
</dbReference>
<organism>
    <name type="scientific">Mus musculus</name>
    <name type="common">Mouse</name>
    <dbReference type="NCBI Taxonomy" id="10090"/>
    <lineage>
        <taxon>Eukaryota</taxon>
        <taxon>Metazoa</taxon>
        <taxon>Chordata</taxon>
        <taxon>Craniata</taxon>
        <taxon>Vertebrata</taxon>
        <taxon>Euteleostomi</taxon>
        <taxon>Mammalia</taxon>
        <taxon>Eutheria</taxon>
        <taxon>Euarchontoglires</taxon>
        <taxon>Glires</taxon>
        <taxon>Rodentia</taxon>
        <taxon>Myomorpha</taxon>
        <taxon>Muroidea</taxon>
        <taxon>Muridae</taxon>
        <taxon>Murinae</taxon>
        <taxon>Mus</taxon>
        <taxon>Mus</taxon>
    </lineage>
</organism>
<comment type="function">
    <text evidence="2 3 7 8 9">Cytokine that may play an important role during carcinogenesis and metanephric kidney organogenesis, as BMP a antagonist required for early limb outgrowth and patterning in maintaining the FGF4-SHH feedback loop (PubMed:12808456, PubMed:15201225). Down-regulates the BMP4 signaling in a dose-dependent manner (PubMed:15133038). Antagonist of BMP2; inhibits BMP2-mediated differentiation of osteoblasts (in vitro) (By similarity). Acts as inhibitor of monocyte chemotaxis (By similarity).</text>
</comment>
<comment type="subunit">
    <text evidence="2 3">Homodimer; can also form homooligomers. Interacts with BMP2; can form higher oligomers with BMP2 (By similarity). Interacts with SLIT1 and SLIT2 in a glycosylation-dependent manner (By similarity).</text>
</comment>
<comment type="subcellular location">
    <subcellularLocation>
        <location evidence="10">Secreted</location>
    </subcellularLocation>
</comment>
<comment type="tissue specificity">
    <text evidence="6 7 8">Highly expressed in spleen and to a lesser extent in lung, skeletal muscle and kidney. Expressed only in non-transformed cells or primary fibroblasts in culture but not in established transformed or tumor derived cell lines. Broadly expressed in limb bud mesenchyme but restricted to the distal limb bud mesenchyme and concentrated posteriorly. Expressed in ovary especially in granulosa cells of follicles of type 4.</text>
</comment>
<comment type="induction">
    <text evidence="8">Up-regulated by GDF9 dose-dependent manner and BMP4 in granulosa cells. Highly regulated during folliculogenesis.</text>
</comment>
<comment type="similarity">
    <text evidence="10">Belongs to the DAN family.</text>
</comment>
<feature type="signal peptide" evidence="1">
    <location>
        <begin position="1"/>
        <end position="24"/>
    </location>
</feature>
<feature type="chain" id="PRO_0000006716" description="Gremlin-1">
    <location>
        <begin position="25"/>
        <end position="184"/>
    </location>
</feature>
<feature type="domain" description="CTCK">
    <location>
        <begin position="94"/>
        <end position="184"/>
    </location>
</feature>
<feature type="region of interest" description="Disordered" evidence="5">
    <location>
        <begin position="23"/>
        <end position="77"/>
    </location>
</feature>
<feature type="glycosylation site" description="N-linked (GlcNAc...) asparagine" evidence="4">
    <location>
        <position position="42"/>
    </location>
</feature>
<feature type="disulfide bond" evidence="3">
    <location>
        <begin position="94"/>
        <end position="144"/>
    </location>
</feature>
<feature type="disulfide bond" evidence="3">
    <location>
        <begin position="108"/>
        <end position="158"/>
    </location>
</feature>
<feature type="disulfide bond" evidence="3">
    <location>
        <begin position="118"/>
        <end position="176"/>
    </location>
</feature>
<feature type="disulfide bond" evidence="3">
    <location>
        <begin position="122"/>
        <end position="178"/>
    </location>
</feature>
<evidence type="ECO:0000250" key="1"/>
<evidence type="ECO:0000250" key="2">
    <source>
        <dbReference type="UniProtKB" id="O35793"/>
    </source>
</evidence>
<evidence type="ECO:0000250" key="3">
    <source>
        <dbReference type="UniProtKB" id="O60565"/>
    </source>
</evidence>
<evidence type="ECO:0000255" key="4"/>
<evidence type="ECO:0000256" key="5">
    <source>
        <dbReference type="SAM" id="MobiDB-lite"/>
    </source>
</evidence>
<evidence type="ECO:0000269" key="6">
    <source>
    </source>
</evidence>
<evidence type="ECO:0000269" key="7">
    <source>
    </source>
</evidence>
<evidence type="ECO:0000269" key="8">
    <source>
    </source>
</evidence>
<evidence type="ECO:0000269" key="9">
    <source>
    </source>
</evidence>
<evidence type="ECO:0000305" key="10"/>
<gene>
    <name type="primary">Grem1</name>
    <name type="synonym">Cktsf1b1</name>
    <name type="synonym">Drm</name>
</gene>
<sequence length="184" mass="20710">MNRTAYTVGALLLLLGTLLPTAEGKKKGSQGAIPPPDKAQHNDSEQTQSPPQPGSRTRGRGQGRGTAMPGEEVLESSQEALHVTERKYLKRDWCKTQPLKQTIHEEGCNSRTIINRFCYGQCNSFYIPRHIRKEEGSFQSCSFCKPKKFTTMMVTLNCPELQPPTKKKRVTRVKQCRCISIDLD</sequence>
<accession>O70326</accession>
<reference key="1">
    <citation type="journal article" date="1998" name="Mol. Cell">
        <title>The Xenopus dorsalizing factor Gremlin identifies a novel family of secreted proteins that antagonize BMP activities.</title>
        <authorList>
            <person name="Hsu D.R."/>
            <person name="Economides A.N."/>
            <person name="Wang X."/>
            <person name="Eimon P.M."/>
            <person name="Harland R.M."/>
        </authorList>
    </citation>
    <scope>NUCLEOTIDE SEQUENCE [MRNA]</scope>
</reference>
<reference key="2">
    <citation type="journal article" date="2000" name="Cytogenet. Cell Genet.">
        <title>Cloning of the murine Drm gene (Cktsf1b1) and characterization of its oncogene suppressible promoter.</title>
        <authorList>
            <person name="Zhang Q."/>
            <person name="Topol L.Z."/>
            <person name="Athanasiou M."/>
            <person name="Copeland N.G."/>
            <person name="Gilbert D.J."/>
            <person name="Jenkins N.A."/>
            <person name="Blair D.G."/>
        </authorList>
    </citation>
    <scope>NUCLEOTIDE SEQUENCE [MRNA]</scope>
    <scope>TISSUE SPECIFICITY</scope>
    <source>
        <tissue>Spleen</tissue>
    </source>
</reference>
<reference key="3">
    <citation type="journal article" date="2004" name="Genome Res.">
        <title>The status, quality, and expansion of the NIH full-length cDNA project: the Mammalian Gene Collection (MGC).</title>
        <authorList>
            <consortium name="The MGC Project Team"/>
        </authorList>
    </citation>
    <scope>NUCLEOTIDE SEQUENCE [LARGE SCALE MRNA]</scope>
    <source>
        <strain>FVB/N</strain>
        <tissue>Colon</tissue>
    </source>
</reference>
<reference key="4">
    <citation type="journal article" date="2003" name="Nat. Genet.">
        <title>Gremlin is the BMP antagonist required for maintenance of Shh and Fgf signals during limb patterning.</title>
        <authorList>
            <person name="Khokha M.K."/>
            <person name="Hsu D."/>
            <person name="Brunet L.J."/>
            <person name="Dionne M.S."/>
            <person name="Harland R.M."/>
        </authorList>
    </citation>
    <scope>FUNCTION</scope>
    <scope>TISSUE SPECIFICITY</scope>
</reference>
<reference key="5">
    <citation type="journal article" date="2004" name="J. Biol. Chem.">
        <title>Growth differentiation factor 9 regulates expression of the bone morphogenetic protein antagonist gremlin.</title>
        <authorList>
            <person name="Pangas S.A."/>
            <person name="Jorgez C.J."/>
            <person name="Matzuk M.M."/>
        </authorList>
    </citation>
    <scope>FUNCTION</scope>
    <scope>TISSUE SPECIFICITY</scope>
    <scope>INDUCTION</scope>
</reference>
<reference key="6">
    <citation type="journal article" date="2004" name="Development">
        <title>Gremlin-mediated BMP antagonism induces the epithelial-mesenchymal feedback signaling controlling metanephric kidney and limb organogenesis.</title>
        <authorList>
            <person name="Michos O."/>
            <person name="Panman L."/>
            <person name="Vintersten K."/>
            <person name="Beier K."/>
            <person name="Zeller R."/>
            <person name="Zuniga A."/>
        </authorList>
    </citation>
    <scope>FUNCTION</scope>
</reference>
<name>GREM1_MOUSE</name>